<organism>
    <name type="scientific">Ruegeria pomeroyi (strain ATCC 700808 / DSM 15171 / DSS-3)</name>
    <name type="common">Silicibacter pomeroyi</name>
    <dbReference type="NCBI Taxonomy" id="246200"/>
    <lineage>
        <taxon>Bacteria</taxon>
        <taxon>Pseudomonadati</taxon>
        <taxon>Pseudomonadota</taxon>
        <taxon>Alphaproteobacteria</taxon>
        <taxon>Rhodobacterales</taxon>
        <taxon>Roseobacteraceae</taxon>
        <taxon>Ruegeria</taxon>
    </lineage>
</organism>
<evidence type="ECO:0000255" key="1">
    <source>
        <dbReference type="HAMAP-Rule" id="MF_00636"/>
    </source>
</evidence>
<keyword id="KW-0067">ATP-binding</keyword>
<keyword id="KW-0342">GTP-binding</keyword>
<keyword id="KW-0547">Nucleotide-binding</keyword>
<keyword id="KW-1185">Reference proteome</keyword>
<protein>
    <recommendedName>
        <fullName evidence="1">Nucleotide-binding protein SPO0713</fullName>
    </recommendedName>
</protein>
<sequence length="284" mass="31357">MTGPSGAGRSTAINVLEDLGFEAIDNLPMGLLMRLLDGPALRRPLALGLDARNRDFSTEGFLDLSKRLASLEGFQVTTLYLDCSADILLRRFSETRRRHPMSPGSSPLEGVEHELELLRPIREAADTLIDTTALNVHQLRREVERWFAPSGGSMLAISVESFSYKRGLPRGLDMVFDCRFLANPHWQPDLRAADGRDPAVAAYVHADPQYLPFFTRVTDLLQSLLPAFRSEGKAHLSVGFGCTGGQHRSVALTEAVAKALAEAGGQVSIRHREMERRKPDARPD</sequence>
<reference key="1">
    <citation type="journal article" date="2004" name="Nature">
        <title>Genome sequence of Silicibacter pomeroyi reveals adaptations to the marine environment.</title>
        <authorList>
            <person name="Moran M.A."/>
            <person name="Buchan A."/>
            <person name="Gonzalez J.M."/>
            <person name="Heidelberg J.F."/>
            <person name="Whitman W.B."/>
            <person name="Kiene R.P."/>
            <person name="Henriksen J.R."/>
            <person name="King G.M."/>
            <person name="Belas R."/>
            <person name="Fuqua C."/>
            <person name="Brinkac L.M."/>
            <person name="Lewis M."/>
            <person name="Johri S."/>
            <person name="Weaver B."/>
            <person name="Pai G."/>
            <person name="Eisen J.A."/>
            <person name="Rahe E."/>
            <person name="Sheldon W.M."/>
            <person name="Ye W."/>
            <person name="Miller T.R."/>
            <person name="Carlton J."/>
            <person name="Rasko D.A."/>
            <person name="Paulsen I.T."/>
            <person name="Ren Q."/>
            <person name="Daugherty S.C."/>
            <person name="DeBoy R.T."/>
            <person name="Dodson R.J."/>
            <person name="Durkin A.S."/>
            <person name="Madupu R."/>
            <person name="Nelson W.C."/>
            <person name="Sullivan S.A."/>
            <person name="Rosovitz M.J."/>
            <person name="Haft D.H."/>
            <person name="Selengut J."/>
            <person name="Ward N."/>
        </authorList>
    </citation>
    <scope>NUCLEOTIDE SEQUENCE [LARGE SCALE GENOMIC DNA]</scope>
    <source>
        <strain>ATCC 700808 / DSM 15171 / DSS-3</strain>
    </source>
</reference>
<reference key="2">
    <citation type="journal article" date="2014" name="Stand. Genomic Sci.">
        <title>An updated genome annotation for the model marine bacterium Ruegeria pomeroyi DSS-3.</title>
        <authorList>
            <person name="Rivers A.R."/>
            <person name="Smith C.B."/>
            <person name="Moran M.A."/>
        </authorList>
    </citation>
    <scope>GENOME REANNOTATION</scope>
    <source>
        <strain>ATCC 700808 / DSM 15171 / DSS-3</strain>
    </source>
</reference>
<dbReference type="EMBL" id="CP000031">
    <property type="protein sequence ID" value="AAV94019.1"/>
    <property type="molecule type" value="Genomic_DNA"/>
</dbReference>
<dbReference type="SMR" id="Q5LVI8"/>
<dbReference type="STRING" id="246200.SPO0713"/>
<dbReference type="PaxDb" id="246200-SPO0713"/>
<dbReference type="KEGG" id="sil:SPO0713"/>
<dbReference type="eggNOG" id="COG1660">
    <property type="taxonomic scope" value="Bacteria"/>
</dbReference>
<dbReference type="HOGENOM" id="CLU_059558_0_0_5"/>
<dbReference type="Proteomes" id="UP000001023">
    <property type="component" value="Chromosome"/>
</dbReference>
<dbReference type="GO" id="GO:0005524">
    <property type="term" value="F:ATP binding"/>
    <property type="evidence" value="ECO:0007669"/>
    <property type="project" value="UniProtKB-UniRule"/>
</dbReference>
<dbReference type="GO" id="GO:0005525">
    <property type="term" value="F:GTP binding"/>
    <property type="evidence" value="ECO:0007669"/>
    <property type="project" value="UniProtKB-UniRule"/>
</dbReference>
<dbReference type="Gene3D" id="3.40.50.300">
    <property type="entry name" value="P-loop containing nucleotide triphosphate hydrolases"/>
    <property type="match status" value="1"/>
</dbReference>
<dbReference type="HAMAP" id="MF_00636">
    <property type="entry name" value="RapZ_like"/>
    <property type="match status" value="1"/>
</dbReference>
<dbReference type="InterPro" id="IPR027417">
    <property type="entry name" value="P-loop_NTPase"/>
</dbReference>
<dbReference type="InterPro" id="IPR005337">
    <property type="entry name" value="RapZ-like"/>
</dbReference>
<dbReference type="InterPro" id="IPR053930">
    <property type="entry name" value="RapZ-like_N"/>
</dbReference>
<dbReference type="InterPro" id="IPR053931">
    <property type="entry name" value="RapZ_C"/>
</dbReference>
<dbReference type="NCBIfam" id="NF003828">
    <property type="entry name" value="PRK05416.1"/>
    <property type="match status" value="1"/>
</dbReference>
<dbReference type="PANTHER" id="PTHR30448">
    <property type="entry name" value="RNASE ADAPTER PROTEIN RAPZ"/>
    <property type="match status" value="1"/>
</dbReference>
<dbReference type="PANTHER" id="PTHR30448:SF0">
    <property type="entry name" value="RNASE ADAPTER PROTEIN RAPZ"/>
    <property type="match status" value="1"/>
</dbReference>
<dbReference type="Pfam" id="PF22740">
    <property type="entry name" value="PapZ_C"/>
    <property type="match status" value="1"/>
</dbReference>
<dbReference type="Pfam" id="PF03668">
    <property type="entry name" value="RapZ-like_N"/>
    <property type="match status" value="1"/>
</dbReference>
<dbReference type="PIRSF" id="PIRSF005052">
    <property type="entry name" value="P-loopkin"/>
    <property type="match status" value="1"/>
</dbReference>
<dbReference type="SUPFAM" id="SSF52540">
    <property type="entry name" value="P-loop containing nucleoside triphosphate hydrolases"/>
    <property type="match status" value="1"/>
</dbReference>
<gene>
    <name type="ordered locus">SPO0713</name>
</gene>
<proteinExistence type="inferred from homology"/>
<feature type="chain" id="PRO_0000107756" description="Nucleotide-binding protein SPO0713">
    <location>
        <begin position="1"/>
        <end position="284"/>
    </location>
</feature>
<feature type="binding site" evidence="1">
    <location>
        <begin position="3"/>
        <end position="10"/>
    </location>
    <ligand>
        <name>ATP</name>
        <dbReference type="ChEBI" id="CHEBI:30616"/>
    </ligand>
</feature>
<feature type="binding site" evidence="1">
    <location>
        <begin position="50"/>
        <end position="53"/>
    </location>
    <ligand>
        <name>GTP</name>
        <dbReference type="ChEBI" id="CHEBI:37565"/>
    </ligand>
</feature>
<accession>Q5LVI8</accession>
<name>Y713_RUEPO</name>
<comment type="function">
    <text evidence="1">Displays ATPase and GTPase activities.</text>
</comment>
<comment type="similarity">
    <text evidence="1">Belongs to the RapZ-like family.</text>
</comment>